<protein>
    <recommendedName>
        <fullName evidence="1">UDP-N-acetylglucosamine--N-acetylmuramyl-(pentapeptide) pyrophosphoryl-undecaprenol N-acetylglucosamine transferase</fullName>
        <ecNumber evidence="1">2.4.1.227</ecNumber>
    </recommendedName>
    <alternativeName>
        <fullName evidence="1">Undecaprenyl-PP-MurNAc-pentapeptide-UDPGlcNAc GlcNAc transferase</fullName>
    </alternativeName>
</protein>
<sequence>MTKPSILVMAGGTGGHIFPGLAVAEYLRICGWNVSWLGNQSGMEYRLVKSCNFPFEAVEFGGLRGKGIKAKLMLPINLARACHQSWKIMRRLKPNVVLGMGGYITFPGGLISKLLKRPLVLHEANSVAGSANRALAKIAMRTLTGFPNTMENAEWVGNPIRQEFDDIAAPAERYEQRQGPLSLLVVGGSLGAAALNENIPAALALIPLEQRPTVIHQAGDKHLLDLQKRYADLGVLADIRPFIEDMPTAYAQADLVICRSGAMTVSELAACGVASCLIPFPHAIDDHQTANAQFLSDADAAVFLPQKNLNPQDLALMIQNLTRTDLKEMAVRAHALSKPHATQRVAEVCADCAGVGI</sequence>
<feature type="chain" id="PRO_1000074463" description="UDP-N-acetylglucosamine--N-acetylmuramyl-(pentapeptide) pyrophosphoryl-undecaprenol N-acetylglucosamine transferase">
    <location>
        <begin position="1"/>
        <end position="357"/>
    </location>
</feature>
<feature type="binding site" evidence="1">
    <location>
        <begin position="13"/>
        <end position="15"/>
    </location>
    <ligand>
        <name>UDP-N-acetyl-alpha-D-glucosamine</name>
        <dbReference type="ChEBI" id="CHEBI:57705"/>
    </ligand>
</feature>
<feature type="binding site" evidence="1">
    <location>
        <position position="125"/>
    </location>
    <ligand>
        <name>UDP-N-acetyl-alpha-D-glucosamine</name>
        <dbReference type="ChEBI" id="CHEBI:57705"/>
    </ligand>
</feature>
<feature type="binding site" evidence="1">
    <location>
        <position position="161"/>
    </location>
    <ligand>
        <name>UDP-N-acetyl-alpha-D-glucosamine</name>
        <dbReference type="ChEBI" id="CHEBI:57705"/>
    </ligand>
</feature>
<feature type="binding site" evidence="1">
    <location>
        <position position="189"/>
    </location>
    <ligand>
        <name>UDP-N-acetyl-alpha-D-glucosamine</name>
        <dbReference type="ChEBI" id="CHEBI:57705"/>
    </ligand>
</feature>
<feature type="binding site" evidence="1">
    <location>
        <position position="243"/>
    </location>
    <ligand>
        <name>UDP-N-acetyl-alpha-D-glucosamine</name>
        <dbReference type="ChEBI" id="CHEBI:57705"/>
    </ligand>
</feature>
<feature type="binding site" evidence="1">
    <location>
        <position position="288"/>
    </location>
    <ligand>
        <name>UDP-N-acetyl-alpha-D-glucosamine</name>
        <dbReference type="ChEBI" id="CHEBI:57705"/>
    </ligand>
</feature>
<accession>A4SV74</accession>
<proteinExistence type="inferred from homology"/>
<evidence type="ECO:0000255" key="1">
    <source>
        <dbReference type="HAMAP-Rule" id="MF_00033"/>
    </source>
</evidence>
<name>MURG_POLAQ</name>
<organism>
    <name type="scientific">Polynucleobacter asymbioticus (strain DSM 18221 / CIP 109841 / QLW-P1DMWA-1)</name>
    <name type="common">Polynucleobacter necessarius subsp. asymbioticus</name>
    <dbReference type="NCBI Taxonomy" id="312153"/>
    <lineage>
        <taxon>Bacteria</taxon>
        <taxon>Pseudomonadati</taxon>
        <taxon>Pseudomonadota</taxon>
        <taxon>Betaproteobacteria</taxon>
        <taxon>Burkholderiales</taxon>
        <taxon>Burkholderiaceae</taxon>
        <taxon>Polynucleobacter</taxon>
    </lineage>
</organism>
<dbReference type="EC" id="2.4.1.227" evidence="1"/>
<dbReference type="EMBL" id="CP000655">
    <property type="protein sequence ID" value="ABP33388.1"/>
    <property type="molecule type" value="Genomic_DNA"/>
</dbReference>
<dbReference type="RefSeq" id="WP_011902013.1">
    <property type="nucleotide sequence ID" value="NC_009379.1"/>
</dbReference>
<dbReference type="SMR" id="A4SV74"/>
<dbReference type="CAZy" id="GT28">
    <property type="family name" value="Glycosyltransferase Family 28"/>
</dbReference>
<dbReference type="GeneID" id="31480516"/>
<dbReference type="KEGG" id="pnu:Pnuc_0167"/>
<dbReference type="eggNOG" id="COG0707">
    <property type="taxonomic scope" value="Bacteria"/>
</dbReference>
<dbReference type="HOGENOM" id="CLU_037404_2_0_4"/>
<dbReference type="UniPathway" id="UPA00219"/>
<dbReference type="Proteomes" id="UP000000231">
    <property type="component" value="Chromosome"/>
</dbReference>
<dbReference type="GO" id="GO:0005886">
    <property type="term" value="C:plasma membrane"/>
    <property type="evidence" value="ECO:0007669"/>
    <property type="project" value="UniProtKB-SubCell"/>
</dbReference>
<dbReference type="GO" id="GO:0051991">
    <property type="term" value="F:UDP-N-acetyl-D-glucosamine:N-acetylmuramoyl-L-alanyl-D-glutamyl-meso-2,6-diaminopimelyl-D-alanyl-D-alanine-diphosphoundecaprenol 4-beta-N-acetylglucosaminlytransferase activity"/>
    <property type="evidence" value="ECO:0007669"/>
    <property type="project" value="RHEA"/>
</dbReference>
<dbReference type="GO" id="GO:0050511">
    <property type="term" value="F:undecaprenyldiphospho-muramoylpentapeptide beta-N-acetylglucosaminyltransferase activity"/>
    <property type="evidence" value="ECO:0007669"/>
    <property type="project" value="UniProtKB-UniRule"/>
</dbReference>
<dbReference type="GO" id="GO:0005975">
    <property type="term" value="P:carbohydrate metabolic process"/>
    <property type="evidence" value="ECO:0007669"/>
    <property type="project" value="InterPro"/>
</dbReference>
<dbReference type="GO" id="GO:0051301">
    <property type="term" value="P:cell division"/>
    <property type="evidence" value="ECO:0007669"/>
    <property type="project" value="UniProtKB-KW"/>
</dbReference>
<dbReference type="GO" id="GO:0071555">
    <property type="term" value="P:cell wall organization"/>
    <property type="evidence" value="ECO:0007669"/>
    <property type="project" value="UniProtKB-KW"/>
</dbReference>
<dbReference type="GO" id="GO:0030259">
    <property type="term" value="P:lipid glycosylation"/>
    <property type="evidence" value="ECO:0007669"/>
    <property type="project" value="UniProtKB-UniRule"/>
</dbReference>
<dbReference type="GO" id="GO:0009252">
    <property type="term" value="P:peptidoglycan biosynthetic process"/>
    <property type="evidence" value="ECO:0007669"/>
    <property type="project" value="UniProtKB-UniRule"/>
</dbReference>
<dbReference type="GO" id="GO:0008360">
    <property type="term" value="P:regulation of cell shape"/>
    <property type="evidence" value="ECO:0007669"/>
    <property type="project" value="UniProtKB-KW"/>
</dbReference>
<dbReference type="CDD" id="cd03785">
    <property type="entry name" value="GT28_MurG"/>
    <property type="match status" value="1"/>
</dbReference>
<dbReference type="Gene3D" id="3.40.50.2000">
    <property type="entry name" value="Glycogen Phosphorylase B"/>
    <property type="match status" value="2"/>
</dbReference>
<dbReference type="HAMAP" id="MF_00033">
    <property type="entry name" value="MurG"/>
    <property type="match status" value="1"/>
</dbReference>
<dbReference type="InterPro" id="IPR006009">
    <property type="entry name" value="GlcNAc_MurG"/>
</dbReference>
<dbReference type="InterPro" id="IPR007235">
    <property type="entry name" value="Glyco_trans_28_C"/>
</dbReference>
<dbReference type="InterPro" id="IPR004276">
    <property type="entry name" value="GlycoTrans_28_N"/>
</dbReference>
<dbReference type="NCBIfam" id="TIGR01133">
    <property type="entry name" value="murG"/>
    <property type="match status" value="1"/>
</dbReference>
<dbReference type="PANTHER" id="PTHR21015:SF22">
    <property type="entry name" value="GLYCOSYLTRANSFERASE"/>
    <property type="match status" value="1"/>
</dbReference>
<dbReference type="PANTHER" id="PTHR21015">
    <property type="entry name" value="UDP-N-ACETYLGLUCOSAMINE--N-ACETYLMURAMYL-(PENTAPEPTIDE) PYROPHOSPHORYL-UNDECAPRENOL N-ACETYLGLUCOSAMINE TRANSFERASE 1"/>
    <property type="match status" value="1"/>
</dbReference>
<dbReference type="Pfam" id="PF04101">
    <property type="entry name" value="Glyco_tran_28_C"/>
    <property type="match status" value="1"/>
</dbReference>
<dbReference type="Pfam" id="PF03033">
    <property type="entry name" value="Glyco_transf_28"/>
    <property type="match status" value="1"/>
</dbReference>
<dbReference type="SUPFAM" id="SSF53756">
    <property type="entry name" value="UDP-Glycosyltransferase/glycogen phosphorylase"/>
    <property type="match status" value="1"/>
</dbReference>
<keyword id="KW-0131">Cell cycle</keyword>
<keyword id="KW-0132">Cell division</keyword>
<keyword id="KW-0997">Cell inner membrane</keyword>
<keyword id="KW-1003">Cell membrane</keyword>
<keyword id="KW-0133">Cell shape</keyword>
<keyword id="KW-0961">Cell wall biogenesis/degradation</keyword>
<keyword id="KW-0328">Glycosyltransferase</keyword>
<keyword id="KW-0472">Membrane</keyword>
<keyword id="KW-0573">Peptidoglycan synthesis</keyword>
<keyword id="KW-1185">Reference proteome</keyword>
<keyword id="KW-0808">Transferase</keyword>
<reference key="1">
    <citation type="journal article" date="2012" name="Stand. Genomic Sci.">
        <title>Complete genome sequence of Polynucleobacter necessarius subsp. asymbioticus type strain (QLW-P1DMWA-1(T)).</title>
        <authorList>
            <person name="Meincke L."/>
            <person name="Copeland A."/>
            <person name="Lapidus A."/>
            <person name="Lucas S."/>
            <person name="Berry K.W."/>
            <person name="Del Rio T.G."/>
            <person name="Hammon N."/>
            <person name="Dalin E."/>
            <person name="Tice H."/>
            <person name="Pitluck S."/>
            <person name="Richardson P."/>
            <person name="Bruce D."/>
            <person name="Goodwin L."/>
            <person name="Han C."/>
            <person name="Tapia R."/>
            <person name="Detter J.C."/>
            <person name="Schmutz J."/>
            <person name="Brettin T."/>
            <person name="Larimer F."/>
            <person name="Land M."/>
            <person name="Hauser L."/>
            <person name="Kyrpides N.C."/>
            <person name="Ivanova N."/>
            <person name="Goker M."/>
            <person name="Woyke T."/>
            <person name="Wu Q.L."/>
            <person name="Pockl M."/>
            <person name="Hahn M.W."/>
            <person name="Klenk H.P."/>
        </authorList>
    </citation>
    <scope>NUCLEOTIDE SEQUENCE [LARGE SCALE GENOMIC DNA]</scope>
    <source>
        <strain>DSM 18221 / CIP 109841 / QLW-P1DMWA-1</strain>
    </source>
</reference>
<gene>
    <name evidence="1" type="primary">murG</name>
    <name type="ordered locus">Pnuc_0167</name>
</gene>
<comment type="function">
    <text evidence="1">Cell wall formation. Catalyzes the transfer of a GlcNAc subunit on undecaprenyl-pyrophosphoryl-MurNAc-pentapeptide (lipid intermediate I) to form undecaprenyl-pyrophosphoryl-MurNAc-(pentapeptide)GlcNAc (lipid intermediate II).</text>
</comment>
<comment type="catalytic activity">
    <reaction evidence="1">
        <text>di-trans,octa-cis-undecaprenyl diphospho-N-acetyl-alpha-D-muramoyl-L-alanyl-D-glutamyl-meso-2,6-diaminopimeloyl-D-alanyl-D-alanine + UDP-N-acetyl-alpha-D-glucosamine = di-trans,octa-cis-undecaprenyl diphospho-[N-acetyl-alpha-D-glucosaminyl-(1-&gt;4)]-N-acetyl-alpha-D-muramoyl-L-alanyl-D-glutamyl-meso-2,6-diaminopimeloyl-D-alanyl-D-alanine + UDP + H(+)</text>
        <dbReference type="Rhea" id="RHEA:31227"/>
        <dbReference type="ChEBI" id="CHEBI:15378"/>
        <dbReference type="ChEBI" id="CHEBI:57705"/>
        <dbReference type="ChEBI" id="CHEBI:58223"/>
        <dbReference type="ChEBI" id="CHEBI:61387"/>
        <dbReference type="ChEBI" id="CHEBI:61388"/>
        <dbReference type="EC" id="2.4.1.227"/>
    </reaction>
</comment>
<comment type="pathway">
    <text evidence="1">Cell wall biogenesis; peptidoglycan biosynthesis.</text>
</comment>
<comment type="subcellular location">
    <subcellularLocation>
        <location evidence="1">Cell inner membrane</location>
        <topology evidence="1">Peripheral membrane protein</topology>
        <orientation evidence="1">Cytoplasmic side</orientation>
    </subcellularLocation>
</comment>
<comment type="similarity">
    <text evidence="1">Belongs to the glycosyltransferase 28 family. MurG subfamily.</text>
</comment>